<evidence type="ECO:0000255" key="1">
    <source>
        <dbReference type="HAMAP-Rule" id="MF_00197"/>
    </source>
</evidence>
<name>DAPF_SYNJA</name>
<organism>
    <name type="scientific">Synechococcus sp. (strain JA-3-3Ab)</name>
    <name type="common">Cyanobacteria bacterium Yellowstone A-Prime</name>
    <dbReference type="NCBI Taxonomy" id="321327"/>
    <lineage>
        <taxon>Bacteria</taxon>
        <taxon>Bacillati</taxon>
        <taxon>Cyanobacteriota</taxon>
        <taxon>Cyanophyceae</taxon>
        <taxon>Synechococcales</taxon>
        <taxon>Synechococcaceae</taxon>
        <taxon>Synechococcus</taxon>
    </lineage>
</organism>
<gene>
    <name evidence="1" type="primary">dapF</name>
    <name type="ordered locus">CYA_1324</name>
</gene>
<feature type="chain" id="PRO_1000011974" description="Diaminopimelate epimerase">
    <location>
        <begin position="1"/>
        <end position="285"/>
    </location>
</feature>
<feature type="active site" description="Proton donor" evidence="1">
    <location>
        <position position="77"/>
    </location>
</feature>
<feature type="active site" description="Proton acceptor" evidence="1">
    <location>
        <position position="228"/>
    </location>
</feature>
<feature type="binding site" evidence="1">
    <location>
        <position position="15"/>
    </location>
    <ligand>
        <name>substrate</name>
    </ligand>
</feature>
<feature type="binding site" evidence="1">
    <location>
        <position position="68"/>
    </location>
    <ligand>
        <name>substrate</name>
    </ligand>
</feature>
<feature type="binding site" evidence="1">
    <location>
        <begin position="78"/>
        <end position="79"/>
    </location>
    <ligand>
        <name>substrate</name>
    </ligand>
</feature>
<feature type="binding site" evidence="1">
    <location>
        <position position="165"/>
    </location>
    <ligand>
        <name>substrate</name>
    </ligand>
</feature>
<feature type="binding site" evidence="1">
    <location>
        <position position="201"/>
    </location>
    <ligand>
        <name>substrate</name>
    </ligand>
</feature>
<feature type="binding site" evidence="1">
    <location>
        <begin position="219"/>
        <end position="220"/>
    </location>
    <ligand>
        <name>substrate</name>
    </ligand>
</feature>
<feature type="binding site" evidence="1">
    <location>
        <begin position="229"/>
        <end position="230"/>
    </location>
    <ligand>
        <name>substrate</name>
    </ligand>
</feature>
<feature type="site" description="Could be important to modulate the pK values of the two catalytic cysteine residues" evidence="1">
    <location>
        <position position="167"/>
    </location>
</feature>
<feature type="site" description="Could be important to modulate the pK values of the two catalytic cysteine residues" evidence="1">
    <location>
        <position position="219"/>
    </location>
</feature>
<keyword id="KW-0028">Amino-acid biosynthesis</keyword>
<keyword id="KW-0963">Cytoplasm</keyword>
<keyword id="KW-0413">Isomerase</keyword>
<keyword id="KW-0457">Lysine biosynthesis</keyword>
<protein>
    <recommendedName>
        <fullName evidence="1">Diaminopimelate epimerase</fullName>
        <shortName evidence="1">DAP epimerase</shortName>
        <ecNumber evidence="1">5.1.1.7</ecNumber>
    </recommendedName>
    <alternativeName>
        <fullName evidence="1">PLP-independent amino acid racemase</fullName>
    </alternativeName>
</protein>
<proteinExistence type="inferred from homology"/>
<dbReference type="EC" id="5.1.1.7" evidence="1"/>
<dbReference type="EMBL" id="CP000239">
    <property type="protein sequence ID" value="ABC99501.1"/>
    <property type="molecule type" value="Genomic_DNA"/>
</dbReference>
<dbReference type="SMR" id="Q2JUV6"/>
<dbReference type="STRING" id="321327.CYA_1324"/>
<dbReference type="KEGG" id="cya:CYA_1324"/>
<dbReference type="eggNOG" id="COG0253">
    <property type="taxonomic scope" value="Bacteria"/>
</dbReference>
<dbReference type="HOGENOM" id="CLU_053306_2_1_3"/>
<dbReference type="UniPathway" id="UPA00034">
    <property type="reaction ID" value="UER00025"/>
</dbReference>
<dbReference type="Proteomes" id="UP000008818">
    <property type="component" value="Chromosome"/>
</dbReference>
<dbReference type="GO" id="GO:0005829">
    <property type="term" value="C:cytosol"/>
    <property type="evidence" value="ECO:0007669"/>
    <property type="project" value="TreeGrafter"/>
</dbReference>
<dbReference type="GO" id="GO:0008837">
    <property type="term" value="F:diaminopimelate epimerase activity"/>
    <property type="evidence" value="ECO:0007669"/>
    <property type="project" value="UniProtKB-UniRule"/>
</dbReference>
<dbReference type="GO" id="GO:0009089">
    <property type="term" value="P:lysine biosynthetic process via diaminopimelate"/>
    <property type="evidence" value="ECO:0007669"/>
    <property type="project" value="UniProtKB-UniRule"/>
</dbReference>
<dbReference type="FunFam" id="3.10.310.10:FF:000009">
    <property type="entry name" value="Diaminopimelate epimerase chloroplastic"/>
    <property type="match status" value="1"/>
</dbReference>
<dbReference type="Gene3D" id="3.10.310.10">
    <property type="entry name" value="Diaminopimelate Epimerase, Chain A, domain 1"/>
    <property type="match status" value="2"/>
</dbReference>
<dbReference type="HAMAP" id="MF_00197">
    <property type="entry name" value="DAP_epimerase"/>
    <property type="match status" value="1"/>
</dbReference>
<dbReference type="InterPro" id="IPR018510">
    <property type="entry name" value="DAP_epimerase_AS"/>
</dbReference>
<dbReference type="InterPro" id="IPR001653">
    <property type="entry name" value="DAP_epimerase_DapF"/>
</dbReference>
<dbReference type="NCBIfam" id="TIGR00652">
    <property type="entry name" value="DapF"/>
    <property type="match status" value="1"/>
</dbReference>
<dbReference type="PANTHER" id="PTHR31689:SF0">
    <property type="entry name" value="DIAMINOPIMELATE EPIMERASE"/>
    <property type="match status" value="1"/>
</dbReference>
<dbReference type="PANTHER" id="PTHR31689">
    <property type="entry name" value="DIAMINOPIMELATE EPIMERASE, CHLOROPLASTIC"/>
    <property type="match status" value="1"/>
</dbReference>
<dbReference type="Pfam" id="PF01678">
    <property type="entry name" value="DAP_epimerase"/>
    <property type="match status" value="2"/>
</dbReference>
<dbReference type="SUPFAM" id="SSF54506">
    <property type="entry name" value="Diaminopimelate epimerase-like"/>
    <property type="match status" value="2"/>
</dbReference>
<dbReference type="PROSITE" id="PS01326">
    <property type="entry name" value="DAP_EPIMERASE"/>
    <property type="match status" value="1"/>
</dbReference>
<comment type="function">
    <text evidence="1">Catalyzes the stereoinversion of LL-2,6-diaminopimelate (L,L-DAP) to meso-diaminopimelate (meso-DAP), a precursor of L-lysine and an essential component of the bacterial peptidoglycan.</text>
</comment>
<comment type="catalytic activity">
    <reaction evidence="1">
        <text>(2S,6S)-2,6-diaminopimelate = meso-2,6-diaminopimelate</text>
        <dbReference type="Rhea" id="RHEA:15393"/>
        <dbReference type="ChEBI" id="CHEBI:57609"/>
        <dbReference type="ChEBI" id="CHEBI:57791"/>
        <dbReference type="EC" id="5.1.1.7"/>
    </reaction>
</comment>
<comment type="pathway">
    <text evidence="1">Amino-acid biosynthesis; L-lysine biosynthesis via DAP pathway; DL-2,6-diaminopimelate from LL-2,6-diaminopimelate: step 1/1.</text>
</comment>
<comment type="subunit">
    <text evidence="1">Homodimer.</text>
</comment>
<comment type="subcellular location">
    <subcellularLocation>
        <location evidence="1">Cytoplasm</location>
    </subcellularLocation>
</comment>
<comment type="similarity">
    <text evidence="1">Belongs to the diaminopimelate epimerase family.</text>
</comment>
<reference key="1">
    <citation type="journal article" date="2007" name="ISME J.">
        <title>Population level functional diversity in a microbial community revealed by comparative genomic and metagenomic analyses.</title>
        <authorList>
            <person name="Bhaya D."/>
            <person name="Grossman A.R."/>
            <person name="Steunou A.-S."/>
            <person name="Khuri N."/>
            <person name="Cohan F.M."/>
            <person name="Hamamura N."/>
            <person name="Melendrez M.C."/>
            <person name="Bateson M.M."/>
            <person name="Ward D.M."/>
            <person name="Heidelberg J.F."/>
        </authorList>
    </citation>
    <scope>NUCLEOTIDE SEQUENCE [LARGE SCALE GENOMIC DNA]</scope>
    <source>
        <strain>JA-3-3Ab</strain>
    </source>
</reference>
<sequence length="285" mass="30869">MPSRLSFHKYQGLGNDFILVDNRHQPQPCLTPEEAVALCNRRFGVGADGVIFLLPGQEGADFSMRLFNSDGSEAEMCGNGIRCLARFLQDLGIPGQDGAYQIHTLAGRIVPQVRPDGLVTVDMGIPRLLAGQIPTTLAKPEEKVVRQPLQVGGREWAVTAVSMGNPHCVVFLEEGGSLEELDLERVGPLFEHHPAFPERTNTEFAQVLGPNYLRLRVWERGAGVTLACGTGACAALVAAVLEERAEPQATVELPGGNLEIRWDPDTQHVWMTGPALPVFSGTTAE</sequence>
<accession>Q2JUV6</accession>